<organism>
    <name type="scientific">Xenopus laevis</name>
    <name type="common">African clawed frog</name>
    <dbReference type="NCBI Taxonomy" id="8355"/>
    <lineage>
        <taxon>Eukaryota</taxon>
        <taxon>Metazoa</taxon>
        <taxon>Chordata</taxon>
        <taxon>Craniata</taxon>
        <taxon>Vertebrata</taxon>
        <taxon>Euteleostomi</taxon>
        <taxon>Amphibia</taxon>
        <taxon>Batrachia</taxon>
        <taxon>Anura</taxon>
        <taxon>Pipoidea</taxon>
        <taxon>Pipidae</taxon>
        <taxon>Xenopodinae</taxon>
        <taxon>Xenopus</taxon>
        <taxon>Xenopus</taxon>
    </lineage>
</organism>
<reference key="1">
    <citation type="journal article" date="1994" name="Cell">
        <title>Xenopus chordin: a novel dorsalizing factor activated by organizer-specific homeobox genes.</title>
        <authorList>
            <person name="Sasai Y."/>
            <person name="Lu B."/>
            <person name="Steinbeisser H."/>
            <person name="Geissert D."/>
            <person name="Gont L.K."/>
            <person name="De Robertis E.M."/>
        </authorList>
    </citation>
    <scope>NUCLEOTIDE SEQUENCE [MRNA]</scope>
    <scope>FUNCTION</scope>
    <scope>TISSUE SPECIFICITY</scope>
    <scope>INDUCTION</scope>
    <source>
        <tissue>Dorsal lip</tissue>
    </source>
</reference>
<reference key="2">
    <citation type="submission" date="2004-07" db="EMBL/GenBank/DDBJ databases">
        <authorList>
            <consortium name="NIH - Xenopus Gene Collection (XGC) project"/>
        </authorList>
    </citation>
    <scope>NUCLEOTIDE SEQUENCE [LARGE SCALE MRNA]</scope>
    <source>
        <tissue>Embryo</tissue>
    </source>
</reference>
<reference key="3">
    <citation type="journal article" date="1996" name="Dev. Biol.">
        <title>Overexpression of the homeobox gene Xnot-2 leads to notochord formation in Xenopus.</title>
        <authorList>
            <person name="Gont L.K."/>
            <person name="Fainsod A."/>
            <person name="Kim S.-H."/>
            <person name="De Robertis E.M."/>
        </authorList>
    </citation>
    <scope>INDUCTION</scope>
</reference>
<reference key="4">
    <citation type="journal article" date="2000" name="Dev. Biol.">
        <title>Is chordin a long-range- or short-range-acting factor? Roles for BMP1-related metalloproteases in chordin and BMP4 autofeedback loop regulation.</title>
        <authorList>
            <person name="Blitz I.L."/>
            <person name="Shimmi O."/>
            <person name="Wuennenberg-Stapleton K."/>
            <person name="O'Connor M.B."/>
            <person name="Cho K.W.Y."/>
        </authorList>
    </citation>
    <scope>CLEAVAGE</scope>
</reference>
<reference key="5">
    <citation type="journal article" date="2000" name="Nature">
        <title>The evolutionarily conserved BMP-binding protein Twisted gastrulation promotes BMP signalling.</title>
        <authorList>
            <person name="Oelgeschlager M."/>
            <person name="Larrain J."/>
            <person name="Geissert D."/>
            <person name="De Robertis E.M."/>
        </authorList>
    </citation>
    <scope>INTERACTION WITH TWSG1 AND BMP4</scope>
</reference>
<reference key="6">
    <citation type="journal article" date="2008" name="Cell">
        <title>Robust stability of the embryonic axial pattern requires a secreted scaffold for chordin degradation.</title>
        <authorList>
            <person name="Inomata H."/>
            <person name="Haraguchi T."/>
            <person name="Sasai Y."/>
        </authorList>
    </citation>
    <scope>INTERACTION WITH OLFML3</scope>
</reference>
<keyword id="KW-0217">Developmental protein</keyword>
<keyword id="KW-0325">Glycoprotein</keyword>
<keyword id="KW-1185">Reference proteome</keyword>
<keyword id="KW-0677">Repeat</keyword>
<keyword id="KW-0964">Secreted</keyword>
<keyword id="KW-0732">Signal</keyword>
<evidence type="ECO:0000250" key="1"/>
<evidence type="ECO:0000255" key="2"/>
<evidence type="ECO:0000255" key="3">
    <source>
        <dbReference type="PROSITE-ProRule" id="PRU00220"/>
    </source>
</evidence>
<evidence type="ECO:0000255" key="4">
    <source>
        <dbReference type="PROSITE-ProRule" id="PRU00230"/>
    </source>
</evidence>
<evidence type="ECO:0000256" key="5">
    <source>
        <dbReference type="SAM" id="MobiDB-lite"/>
    </source>
</evidence>
<evidence type="ECO:0000269" key="6">
    <source>
    </source>
</evidence>
<evidence type="ECO:0000269" key="7">
    <source>
    </source>
</evidence>
<evidence type="ECO:0000269" key="8">
    <source>
    </source>
</evidence>
<evidence type="ECO:0000269" key="9">
    <source>
    </source>
</evidence>
<evidence type="ECO:0000269" key="10">
    <source>
    </source>
</evidence>
<evidence type="ECO:0000305" key="11"/>
<dbReference type="EMBL" id="L35764">
    <property type="protein sequence ID" value="AAC42222.1"/>
    <property type="molecule type" value="mRNA"/>
</dbReference>
<dbReference type="EMBL" id="BC077767">
    <property type="protein sequence ID" value="AAH77767.1"/>
    <property type="molecule type" value="mRNA"/>
</dbReference>
<dbReference type="PIR" id="A55195">
    <property type="entry name" value="A55195"/>
</dbReference>
<dbReference type="RefSeq" id="NP_001081778.1">
    <property type="nucleotide sequence ID" value="NM_001088309.1"/>
</dbReference>
<dbReference type="SMR" id="Q91713"/>
<dbReference type="IntAct" id="Q91713">
    <property type="interactions" value="4"/>
</dbReference>
<dbReference type="GlyCosmos" id="Q91713">
    <property type="glycosylation" value="4 sites, No reported glycans"/>
</dbReference>
<dbReference type="DNASU" id="398045"/>
<dbReference type="GeneID" id="398045"/>
<dbReference type="KEGG" id="xla:398045"/>
<dbReference type="AGR" id="Xenbase:XB-GENE-865395"/>
<dbReference type="CTD" id="398045"/>
<dbReference type="Xenbase" id="XB-GENE-865395">
    <property type="gene designation" value="chrd.S"/>
</dbReference>
<dbReference type="OrthoDB" id="9829321at2759"/>
<dbReference type="PRO" id="PR:Q91713"/>
<dbReference type="Proteomes" id="UP000186698">
    <property type="component" value="Chromosome 5S"/>
</dbReference>
<dbReference type="Bgee" id="398045">
    <property type="expression patterns" value="Expressed in gastrula and 9 other cell types or tissues"/>
</dbReference>
<dbReference type="GO" id="GO:0005576">
    <property type="term" value="C:extracellular region"/>
    <property type="evidence" value="ECO:0000303"/>
    <property type="project" value="UniProtKB"/>
</dbReference>
<dbReference type="GO" id="GO:0005615">
    <property type="term" value="C:extracellular space"/>
    <property type="evidence" value="ECO:0000318"/>
    <property type="project" value="GO_Central"/>
</dbReference>
<dbReference type="GO" id="GO:0036122">
    <property type="term" value="F:BMP binding"/>
    <property type="evidence" value="ECO:0000318"/>
    <property type="project" value="GO_Central"/>
</dbReference>
<dbReference type="GO" id="GO:0008201">
    <property type="term" value="F:heparin binding"/>
    <property type="evidence" value="ECO:0000250"/>
    <property type="project" value="UniProtKB"/>
</dbReference>
<dbReference type="GO" id="GO:0045545">
    <property type="term" value="F:syndecan binding"/>
    <property type="evidence" value="ECO:0000250"/>
    <property type="project" value="UniProtKB"/>
</dbReference>
<dbReference type="GO" id="GO:0009798">
    <property type="term" value="P:axis specification"/>
    <property type="evidence" value="ECO:0000315"/>
    <property type="project" value="UniProtKB"/>
</dbReference>
<dbReference type="GO" id="GO:0043009">
    <property type="term" value="P:chordate embryonic development"/>
    <property type="evidence" value="ECO:0000315"/>
    <property type="project" value="UniProtKB"/>
</dbReference>
<dbReference type="GO" id="GO:0009953">
    <property type="term" value="P:dorsal/ventral pattern formation"/>
    <property type="evidence" value="ECO:0000318"/>
    <property type="project" value="GO_Central"/>
</dbReference>
<dbReference type="GO" id="GO:0030514">
    <property type="term" value="P:negative regulation of BMP signaling pathway"/>
    <property type="evidence" value="ECO:0000318"/>
    <property type="project" value="GO_Central"/>
</dbReference>
<dbReference type="GO" id="GO:0036342">
    <property type="term" value="P:post-anal tail morphogenesis"/>
    <property type="evidence" value="ECO:0000315"/>
    <property type="project" value="UniProtKB"/>
</dbReference>
<dbReference type="GO" id="GO:0048793">
    <property type="term" value="P:pronephros development"/>
    <property type="evidence" value="ECO:0000315"/>
    <property type="project" value="UniProtKB"/>
</dbReference>
<dbReference type="Gene3D" id="6.20.200.20">
    <property type="match status" value="1"/>
</dbReference>
<dbReference type="Gene3D" id="2.10.70.10">
    <property type="entry name" value="Complement Module, domain 1"/>
    <property type="match status" value="1"/>
</dbReference>
<dbReference type="InterPro" id="IPR016353">
    <property type="entry name" value="Chordin"/>
</dbReference>
<dbReference type="InterPro" id="IPR052278">
    <property type="entry name" value="Chordin-like_regulators"/>
</dbReference>
<dbReference type="InterPro" id="IPR010895">
    <property type="entry name" value="CHRD"/>
</dbReference>
<dbReference type="InterPro" id="IPR001007">
    <property type="entry name" value="VWF_dom"/>
</dbReference>
<dbReference type="PANTHER" id="PTHR46526">
    <property type="entry name" value="CHORDIN"/>
    <property type="match status" value="1"/>
</dbReference>
<dbReference type="PANTHER" id="PTHR46526:SF1">
    <property type="entry name" value="CHORDIN"/>
    <property type="match status" value="1"/>
</dbReference>
<dbReference type="Pfam" id="PF07452">
    <property type="entry name" value="CHRD"/>
    <property type="match status" value="3"/>
</dbReference>
<dbReference type="Pfam" id="PF00093">
    <property type="entry name" value="VWC"/>
    <property type="match status" value="3"/>
</dbReference>
<dbReference type="PIRSF" id="PIRSF002496">
    <property type="entry name" value="Chordin"/>
    <property type="match status" value="1"/>
</dbReference>
<dbReference type="SMART" id="SM00754">
    <property type="entry name" value="CHRD"/>
    <property type="match status" value="4"/>
</dbReference>
<dbReference type="SMART" id="SM00214">
    <property type="entry name" value="VWC"/>
    <property type="match status" value="4"/>
</dbReference>
<dbReference type="SUPFAM" id="SSF57603">
    <property type="entry name" value="FnI-like domain"/>
    <property type="match status" value="4"/>
</dbReference>
<dbReference type="PROSITE" id="PS50933">
    <property type="entry name" value="CHRD"/>
    <property type="match status" value="4"/>
</dbReference>
<dbReference type="PROSITE" id="PS01208">
    <property type="entry name" value="VWFC_1"/>
    <property type="match status" value="2"/>
</dbReference>
<dbReference type="PROSITE" id="PS50184">
    <property type="entry name" value="VWFC_2"/>
    <property type="match status" value="3"/>
</dbReference>
<sequence length="941" mass="104947">MQCPPILLVWTLWIMAVDCSRPKVFLPIQPEQEPLQSKTPAGCTFGGKFYSLEDSWHPDLGEPFGVMHCVLCYCEPQRSRRGKPSGKVSCKNIKHDCPSPSCANPILLPLHCCKTCPKAPPPPIKKSDFVFDGFEYFQEKDDDLYNDRSYLSSDDVAVEESRSEYVALLTAPSHVWPPVTSGVAKARFNLQRSNLLFSITYKWIDRLSRIRFSDLDGSVLFEHPVHRMGSPRDDTICGIWRSLNRSTLRLLRMGHILVSLVTTTLSEPEISGKIVKHKALFSESFSALLTPEDSDETGGGGLAMLTLSDVDDNLHFILMLRGLSGEEGDQIPILVQISHQNHVIRELYANISAQEQDFAEVLPDLSSREMLWLAQGQLEISVQTEGRRPQSMSGIITVRKSCDTLQSVLSGGDALNPTKTGAVGSASITLHENGTLEYQIQIAGTMSTVTAVTLETKPRRKTKRNILHDMSKDYHDGRVWGYWIDANARDLHMLLQSELFLNVATKDFQEGELRGQITPLLYSGLWARYEKLPVPLAGQFVSPPIRTGSAGHAWVSLDEHCHLHYQIVVTGLGKAEDAALNAHLHGFAELGEVGESSPGHKRLLKGFYGSEAQGSVKDLDLELLGHLSRGTAFIQVSTKLNPRGEIRGQIHIPNSCESGGVSLTPEEPEYEYEIYEEGRQRDPDDLRKDPRACSFEGQLRAHGSRWAPDYDRKCSVCSCQKRTVICDPIVCPPLNCSQPVHLPDQCCPVCEEKKEMREVKKPERARTSEGCFFDGDRSWKAAGTRWHPFVPPFGLIKCAICTCKGSTGEVHCEKVTCPKLSCTNPIRANPSDCCKQCPVEERSPMELADSMQSDGAGSCRFGRHWYPNHERWHPTVPPFGEMKCVTCTCAEGITQCRRQECTGTTCGTGSKRDRCCTKCKDANQDEDEKVKSDETRTPWSF</sequence>
<gene>
    <name type="primary">chrd</name>
</gene>
<accession>Q91713</accession>
<accession>Q6DD60</accession>
<comment type="function">
    <text evidence="9">Potent dorsalizing factor. Has potent axis-forming activities including the ability to recruit neighboring cells into secondary axes. Regulates cell-cell interactions in the organizing centers of head, trunk and tail development.</text>
</comment>
<comment type="subunit">
    <text evidence="7 8">Interacts with twsg1 and/or bmp4. Interacts with olfml3/ont1.</text>
</comment>
<comment type="interaction">
    <interactant intactId="EBI-1997746">
        <id>Q91713</id>
    </interactant>
    <interactant intactId="EBI-1997734">
        <id>B5MFE9</id>
        <label>olfml3</label>
    </interactant>
    <organismsDiffer>false</organismsDiffer>
    <experiments>6</experiments>
</comment>
<comment type="interaction">
    <interactant intactId="EBI-1997746">
        <id>Q91713</id>
    </interactant>
    <interactant intactId="EBI-1997794">
        <id>Q8JI28</id>
        <label>tll1</label>
    </interactant>
    <organismsDiffer>false</organismsDiffer>
    <experiments>2</experiments>
</comment>
<comment type="subcellular location">
    <subcellularLocation>
        <location evidence="1">Secreted</location>
    </subcellularLocation>
</comment>
<comment type="tissue specificity">
    <text evidence="9">First expressed at stage 9.5 in the dorsal marginal zone. Localized to the dorsal lip of the blastopore (Spemann organizer) during early gastrulation, after which expression continues in tissues derived from the organizer. Expressed in the prechordal plate (head mesoderm) and notochord during early neurulation (stage 13), transiently in the forebrain, tailbud hinge and posterior notochord in the early tailbud (stage 26), the chordoneural hinge in the late tailbud (stage 33) and finally the tip of the tail in the tadpole (stage 42).</text>
</comment>
<comment type="induction">
    <text evidence="9 10">By activin in the presence of de novo protein synthesis, and by gsc and not2.</text>
</comment>
<comment type="PTM">
    <text evidence="6">Cleaved by bmp1; cleavage participates in dorsoventral patterning during early development. Cleavage by bmp1 is enhanced by the interaction with olfml3/ont1.</text>
</comment>
<comment type="similarity">
    <text evidence="11">Belongs to the chordin family.</text>
</comment>
<proteinExistence type="evidence at protein level"/>
<feature type="signal peptide" evidence="2">
    <location>
        <begin position="1"/>
        <end position="19"/>
    </location>
</feature>
<feature type="chain" id="PRO_0000005367" description="Chordin">
    <location>
        <begin position="20"/>
        <end position="941"/>
    </location>
</feature>
<feature type="domain" description="VWFC 1" evidence="3">
    <location>
        <begin position="41"/>
        <end position="117"/>
    </location>
</feature>
<feature type="domain" description="CHRD 1" evidence="4">
    <location>
        <begin position="161"/>
        <end position="279"/>
    </location>
</feature>
<feature type="domain" description="CHRD 2" evidence="4">
    <location>
        <begin position="281"/>
        <end position="401"/>
    </location>
</feature>
<feature type="domain" description="CHRD 3" evidence="4">
    <location>
        <begin position="402"/>
        <end position="522"/>
    </location>
</feature>
<feature type="domain" description="CHRD 4" evidence="4">
    <location>
        <begin position="528"/>
        <end position="655"/>
    </location>
</feature>
<feature type="domain" description="VWFC 2" evidence="3">
    <location>
        <begin position="691"/>
        <end position="751"/>
    </location>
</feature>
<feature type="domain" description="VWFC 3" evidence="3">
    <location>
        <begin position="769"/>
        <end position="838"/>
    </location>
</feature>
<feature type="domain" description="VWFC 4" evidence="3">
    <location>
        <begin position="857"/>
        <end position="919"/>
    </location>
</feature>
<feature type="region of interest" description="Disordered" evidence="5">
    <location>
        <begin position="922"/>
        <end position="941"/>
    </location>
</feature>
<feature type="glycosylation site" description="N-linked (GlcNAc...) asparagine" evidence="2">
    <location>
        <position position="244"/>
    </location>
</feature>
<feature type="glycosylation site" description="N-linked (GlcNAc...) asparagine" evidence="2">
    <location>
        <position position="350"/>
    </location>
</feature>
<feature type="glycosylation site" description="N-linked (GlcNAc...) asparagine" evidence="2">
    <location>
        <position position="433"/>
    </location>
</feature>
<feature type="glycosylation site" description="N-linked (GlcNAc...) asparagine" evidence="2">
    <location>
        <position position="735"/>
    </location>
</feature>
<feature type="sequence conflict" description="In Ref. 2; AAH77767." evidence="11" ref="2">
    <original>L</original>
    <variation>G</variation>
    <location>
        <position position="110"/>
    </location>
</feature>
<feature type="sequence conflict" description="In Ref. 2; AAH77767." evidence="11" ref="2">
    <location>
        <position position="839"/>
    </location>
</feature>
<name>CHRD_XENLA</name>
<protein>
    <recommendedName>
        <fullName>Chordin</fullName>
    </recommendedName>
    <alternativeName>
        <fullName>Organizer-specific secreted-dorsalizing factor</fullName>
    </alternativeName>
</protein>